<proteinExistence type="evidence at protein level"/>
<gene>
    <name type="primary">rpl39e</name>
    <name type="synonym">rl46</name>
    <name type="synonym">rpl46</name>
    <name type="ordered locus">Saci_1467</name>
</gene>
<accession>P13005</accession>
<accession>P95686</accession>
<accession>Q4J8U2</accession>
<dbReference type="EMBL" id="X16161">
    <property type="protein sequence ID" value="CAA34287.1"/>
    <property type="molecule type" value="Genomic_DNA"/>
</dbReference>
<dbReference type="EMBL" id="X77509">
    <property type="protein sequence ID" value="CAA54638.1"/>
    <property type="status" value="ALT_INIT"/>
    <property type="molecule type" value="Genomic_DNA"/>
</dbReference>
<dbReference type="EMBL" id="CP000077">
    <property type="protein sequence ID" value="AAY80788.1"/>
    <property type="status" value="ALT_INIT"/>
    <property type="molecule type" value="Genomic_DNA"/>
</dbReference>
<dbReference type="PIR" id="S53698">
    <property type="entry name" value="S53698"/>
</dbReference>
<dbReference type="RefSeq" id="WP_024083981.1">
    <property type="nucleotide sequence ID" value="NC_007181.1"/>
</dbReference>
<dbReference type="PDB" id="8HKU">
    <property type="method" value="EM"/>
    <property type="resolution" value="2.72 A"/>
    <property type="chains" value="L39E=3-51"/>
</dbReference>
<dbReference type="PDB" id="8HKV">
    <property type="method" value="EM"/>
    <property type="resolution" value="4.94 A"/>
    <property type="chains" value="L39E=3-51"/>
</dbReference>
<dbReference type="PDB" id="8HKY">
    <property type="method" value="EM"/>
    <property type="resolution" value="4.45 A"/>
    <property type="chains" value="L39E=3-51"/>
</dbReference>
<dbReference type="PDB" id="8HKZ">
    <property type="method" value="EM"/>
    <property type="resolution" value="4.78 A"/>
    <property type="chains" value="L39E=3-51"/>
</dbReference>
<dbReference type="PDB" id="8HL1">
    <property type="method" value="EM"/>
    <property type="resolution" value="3.93 A"/>
    <property type="chains" value="L39E=3-51"/>
</dbReference>
<dbReference type="PDB" id="8HL2">
    <property type="method" value="EM"/>
    <property type="resolution" value="4.10 A"/>
    <property type="chains" value="L39E=3-51"/>
</dbReference>
<dbReference type="PDB" id="8HL3">
    <property type="method" value="EM"/>
    <property type="resolution" value="4.80 A"/>
    <property type="chains" value="L39E=3-51"/>
</dbReference>
<dbReference type="PDB" id="8HL4">
    <property type="method" value="EM"/>
    <property type="resolution" value="4.62 A"/>
    <property type="chains" value="L39E=3-51"/>
</dbReference>
<dbReference type="PDB" id="8HL5">
    <property type="method" value="EM"/>
    <property type="resolution" value="5.72 A"/>
    <property type="chains" value="L39E=3-51"/>
</dbReference>
<dbReference type="PDBsum" id="8HKU"/>
<dbReference type="PDBsum" id="8HKV"/>
<dbReference type="PDBsum" id="8HKY"/>
<dbReference type="PDBsum" id="8HKZ"/>
<dbReference type="PDBsum" id="8HL1"/>
<dbReference type="PDBsum" id="8HL2"/>
<dbReference type="PDBsum" id="8HL3"/>
<dbReference type="PDBsum" id="8HL4"/>
<dbReference type="PDBsum" id="8HL5"/>
<dbReference type="EMDB" id="EMD-34860"/>
<dbReference type="EMDB" id="EMD-34861"/>
<dbReference type="EMDB" id="EMD-34863"/>
<dbReference type="EMDB" id="EMD-34864"/>
<dbReference type="EMDB" id="EMD-34866"/>
<dbReference type="EMDB" id="EMD-34867"/>
<dbReference type="EMDB" id="EMD-34868"/>
<dbReference type="EMDB" id="EMD-34869"/>
<dbReference type="EMDB" id="EMD-34870"/>
<dbReference type="SMR" id="P13005"/>
<dbReference type="STRING" id="330779.Saci_1467"/>
<dbReference type="GeneID" id="14551962"/>
<dbReference type="KEGG" id="sai:Saci_1467"/>
<dbReference type="PATRIC" id="fig|330779.12.peg.1411"/>
<dbReference type="eggNOG" id="arCOG04177">
    <property type="taxonomic scope" value="Archaea"/>
</dbReference>
<dbReference type="HOGENOM" id="CLU_181948_4_0_2"/>
<dbReference type="Proteomes" id="UP000001018">
    <property type="component" value="Chromosome"/>
</dbReference>
<dbReference type="GO" id="GO:0022625">
    <property type="term" value="C:cytosolic large ribosomal subunit"/>
    <property type="evidence" value="ECO:0007669"/>
    <property type="project" value="TreeGrafter"/>
</dbReference>
<dbReference type="GO" id="GO:0003735">
    <property type="term" value="F:structural constituent of ribosome"/>
    <property type="evidence" value="ECO:0007669"/>
    <property type="project" value="InterPro"/>
</dbReference>
<dbReference type="GO" id="GO:0006412">
    <property type="term" value="P:translation"/>
    <property type="evidence" value="ECO:0007669"/>
    <property type="project" value="UniProtKB-UniRule"/>
</dbReference>
<dbReference type="FunFam" id="1.10.1620.10:FF:000001">
    <property type="entry name" value="60S ribosomal protein-like L39"/>
    <property type="match status" value="1"/>
</dbReference>
<dbReference type="Gene3D" id="1.10.1620.10">
    <property type="entry name" value="Ribosomal protein L39e"/>
    <property type="match status" value="1"/>
</dbReference>
<dbReference type="HAMAP" id="MF_00629">
    <property type="entry name" value="Ribosomal_eL39"/>
    <property type="match status" value="1"/>
</dbReference>
<dbReference type="InterPro" id="IPR000077">
    <property type="entry name" value="Ribosomal_eL39"/>
</dbReference>
<dbReference type="InterPro" id="IPR020083">
    <property type="entry name" value="Ribosomal_eL39_CS"/>
</dbReference>
<dbReference type="InterPro" id="IPR023626">
    <property type="entry name" value="Ribosomal_eL39_dom_sf"/>
</dbReference>
<dbReference type="NCBIfam" id="NF002316">
    <property type="entry name" value="PRK01242.1"/>
    <property type="match status" value="1"/>
</dbReference>
<dbReference type="PANTHER" id="PTHR19970:SF0">
    <property type="entry name" value="LARGE RIBOSOMAL SUBUNIT PROTEIN EL39"/>
    <property type="match status" value="1"/>
</dbReference>
<dbReference type="PANTHER" id="PTHR19970">
    <property type="entry name" value="RIBOSOMAL PROTEIN L39E"/>
    <property type="match status" value="1"/>
</dbReference>
<dbReference type="Pfam" id="PF00832">
    <property type="entry name" value="Ribosomal_L39"/>
    <property type="match status" value="1"/>
</dbReference>
<dbReference type="SUPFAM" id="SSF48662">
    <property type="entry name" value="Ribosomal protein L39e"/>
    <property type="match status" value="1"/>
</dbReference>
<dbReference type="PROSITE" id="PS00051">
    <property type="entry name" value="RIBOSOMAL_L39E"/>
    <property type="match status" value="1"/>
</dbReference>
<protein>
    <recommendedName>
        <fullName evidence="2">Large ribosomal subunit protein eL39</fullName>
    </recommendedName>
    <alternativeName>
        <fullName>50S ribosomal protein L39e</fullName>
    </alternativeName>
    <alternativeName>
        <fullName>L46e</fullName>
    </alternativeName>
</protein>
<comment type="function">
    <text>Binds specifically to a region in 26S rRNA near the subunit interface.</text>
</comment>
<comment type="similarity">
    <text evidence="2">Belongs to the eukaryotic ribosomal protein eL39 family.</text>
</comment>
<comment type="caution">
    <text evidence="3">Was originally thought to originate from S.solfataricus strain P1, but the culture was contaminated with S.acidocaldarius.</text>
</comment>
<comment type="sequence caution" evidence="2">
    <conflict type="erroneous initiation">
        <sequence resource="EMBL-CDS" id="AAY80788"/>
    </conflict>
</comment>
<comment type="sequence caution" evidence="2">
    <conflict type="erroneous initiation">
        <sequence resource="EMBL-CDS" id="CAA54638"/>
    </conflict>
</comment>
<organism>
    <name type="scientific">Sulfolobus acidocaldarius (strain ATCC 33909 / DSM 639 / JCM 8929 / NBRC 15157 / NCIMB 11770)</name>
    <dbReference type="NCBI Taxonomy" id="330779"/>
    <lineage>
        <taxon>Archaea</taxon>
        <taxon>Thermoproteota</taxon>
        <taxon>Thermoprotei</taxon>
        <taxon>Sulfolobales</taxon>
        <taxon>Sulfolobaceae</taxon>
        <taxon>Sulfolobus</taxon>
    </lineage>
</organism>
<evidence type="ECO:0000269" key="1">
    <source>
    </source>
</evidence>
<evidence type="ECO:0000305" key="2"/>
<evidence type="ECO:0000305" key="3">
    <source>
    </source>
</evidence>
<reference key="1">
    <citation type="journal article" date="1989" name="FEBS Lett.">
        <title>A small basic ribosomal protein in Sulfolobus solfataricus equivalent to L46 in yeast: structure of the protein and its gene.</title>
        <authorList>
            <person name="Ramirez C."/>
            <person name="Louie K.A."/>
            <person name="Matheson A.T."/>
        </authorList>
    </citation>
    <scope>NUCLEOTIDE SEQUENCE [GENOMIC DNA]</scope>
    <scope>PROTEIN SEQUENCE OF 2-47</scope>
</reference>
<reference key="2">
    <citation type="journal article" date="1995" name="Biochim. Biophys. Acta">
        <title>Nucleotide sequence of a gene cluster encoding ribosomal proteins in the thermoacidophilic crenarchaeon Sulfolobus acidocaldarius.</title>
        <authorList>
            <person name="Moll R."/>
            <person name="Schmidtke S."/>
            <person name="Schaefer G."/>
        </authorList>
    </citation>
    <scope>NUCLEOTIDE SEQUENCE [GENOMIC DNA]</scope>
    <source>
        <strain>ATCC 33909 / DSM 639 / JCM 8929 / NBRC 15157 / NCIMB 11770</strain>
    </source>
</reference>
<reference key="3">
    <citation type="journal article" date="2005" name="J. Bacteriol.">
        <title>The genome of Sulfolobus acidocaldarius, a model organism of the Crenarchaeota.</title>
        <authorList>
            <person name="Chen L."/>
            <person name="Bruegger K."/>
            <person name="Skovgaard M."/>
            <person name="Redder P."/>
            <person name="She Q."/>
            <person name="Torarinsson E."/>
            <person name="Greve B."/>
            <person name="Awayez M."/>
            <person name="Zibat A."/>
            <person name="Klenk H.-P."/>
            <person name="Garrett R.A."/>
        </authorList>
    </citation>
    <scope>NUCLEOTIDE SEQUENCE [LARGE SCALE GENOMIC DNA]</scope>
    <source>
        <strain>ATCC 33909 / DSM 639 / JCM 8929 / NBRC 15157 / NCIMB 11770</strain>
    </source>
</reference>
<name>RL39_SULAC</name>
<sequence length="51" mass="6063">MSKHKSLGKKLRLGKALKRNSPIPAWVIIKTQAEIRFNPLRRNWRRNNLKV</sequence>
<keyword id="KW-0002">3D-structure</keyword>
<keyword id="KW-0903">Direct protein sequencing</keyword>
<keyword id="KW-1185">Reference proteome</keyword>
<keyword id="KW-0687">Ribonucleoprotein</keyword>
<keyword id="KW-0689">Ribosomal protein</keyword>
<feature type="initiator methionine" description="Removed" evidence="1">
    <location>
        <position position="1"/>
    </location>
</feature>
<feature type="chain" id="PRO_0000127061" description="Large ribosomal subunit protein eL39">
    <location>
        <begin position="2"/>
        <end position="51"/>
    </location>
</feature>